<keyword id="KW-0997">Cell inner membrane</keyword>
<keyword id="KW-1003">Cell membrane</keyword>
<keyword id="KW-0472">Membrane</keyword>
<keyword id="KW-0653">Protein transport</keyword>
<keyword id="KW-1185">Reference proteome</keyword>
<keyword id="KW-0793">Thylakoid</keyword>
<keyword id="KW-0811">Translocation</keyword>
<keyword id="KW-0812">Transmembrane</keyword>
<keyword id="KW-1133">Transmembrane helix</keyword>
<keyword id="KW-0813">Transport</keyword>
<sequence length="439" mass="47151">MVVSRGKTPNAQETFLQMAQASGLRGRILITVGLLILCRLGIFIPVPGIDRVAFSNDLQGNANLGGVIGFLDIFSGGGLSALGVFALGILPYINASIILQLLTAAVPALEDLQKNEGEAGRRKIAQLTRYVSLGWALLQSIVIAVWVTRYAVTPGPLFTIQTALALVAGSMFVMWISELITERGIGNGASLLIFLNIVATLPRSLQQTLELAQSGDRSTVGGIVILLIVFLATIVGIVFVQEGTRRIPVVSARRQVGNRVYSERSSYLPLRLNQGGVMPIIFASAILVLPFSLANFTSNEVVLRIANYLSPNGPTPWIYALFYLVLIVAFSYFYSSLILNPVDLAQNLKKMGSSIPGVRPGRATSQYVQGVLNRLTILGAVFLGLVAIIPTAVEGATRIRTFQGFGATSLLILVGVAIDTAKQVQTYVISQRYEGMVKD</sequence>
<gene>
    <name evidence="1" type="primary">secY</name>
    <name type="ordered locus">Synpcc7942_2214</name>
</gene>
<proteinExistence type="inferred from homology"/>
<accession>P0A4H0</accession>
<accession>P31159</accession>
<accession>Q31L25</accession>
<comment type="function">
    <text evidence="1">The central subunit of the protein translocation channel SecYEG. Consists of two halves formed by TMs 1-5 and 6-10. These two domains form a lateral gate at the front which open onto the bilayer between TMs 2 and 7, and are clamped together by SecE at the back. The channel is closed by both a pore ring composed of hydrophobic SecY resides and a short helix (helix 2A) on the extracellular side of the membrane which forms a plug. The plug probably moves laterally to allow the channel to open. The ring and the pore may move independently.</text>
</comment>
<comment type="subunit">
    <text evidence="1">Component of the Sec protein translocase complex. Heterotrimer consisting of SecY, SecE and SecG subunits. The heterotrimers can form oligomers, although 1 heterotrimer is thought to be able to translocate proteins. Interacts with the ribosome. Interacts with SecDF, and other proteins may be involved. Interacts with SecA.</text>
</comment>
<comment type="subcellular location">
    <subcellularLocation>
        <location evidence="1">Cell inner membrane</location>
        <topology evidence="1">Multi-pass membrane protein</topology>
    </subcellularLocation>
    <subcellularLocation>
        <location evidence="1">Cellular thylakoid membrane</location>
        <topology evidence="1">Multi-pass membrane protein</topology>
    </subcellularLocation>
</comment>
<comment type="similarity">
    <text evidence="1">Belongs to the SecY/SEC61-alpha family.</text>
</comment>
<dbReference type="EMBL" id="X68056">
    <property type="protein sequence ID" value="CAA48194.1"/>
    <property type="molecule type" value="Genomic_DNA"/>
</dbReference>
<dbReference type="EMBL" id="CP000100">
    <property type="protein sequence ID" value="ABB58244.1"/>
    <property type="molecule type" value="Genomic_DNA"/>
</dbReference>
<dbReference type="RefSeq" id="WP_011244193.1">
    <property type="nucleotide sequence ID" value="NZ_JACJTX010000001.1"/>
</dbReference>
<dbReference type="SMR" id="P0A4H0"/>
<dbReference type="STRING" id="1140.Synpcc7942_2214"/>
<dbReference type="PaxDb" id="1140-Synpcc7942_2214"/>
<dbReference type="GeneID" id="72431097"/>
<dbReference type="KEGG" id="syf:Synpcc7942_2214"/>
<dbReference type="eggNOG" id="COG0201">
    <property type="taxonomic scope" value="Bacteria"/>
</dbReference>
<dbReference type="HOGENOM" id="CLU_030313_0_0_3"/>
<dbReference type="OrthoDB" id="9809248at2"/>
<dbReference type="BioCyc" id="SYNEL:SYNPCC7942_2214-MONOMER"/>
<dbReference type="Proteomes" id="UP000889800">
    <property type="component" value="Chromosome"/>
</dbReference>
<dbReference type="GO" id="GO:0031676">
    <property type="term" value="C:plasma membrane-derived thylakoid membrane"/>
    <property type="evidence" value="ECO:0007669"/>
    <property type="project" value="UniProtKB-SubCell"/>
</dbReference>
<dbReference type="GO" id="GO:0065002">
    <property type="term" value="P:intracellular protein transmembrane transport"/>
    <property type="evidence" value="ECO:0007669"/>
    <property type="project" value="UniProtKB-UniRule"/>
</dbReference>
<dbReference type="GO" id="GO:0006605">
    <property type="term" value="P:protein targeting"/>
    <property type="evidence" value="ECO:0007669"/>
    <property type="project" value="UniProtKB-UniRule"/>
</dbReference>
<dbReference type="GO" id="GO:0043952">
    <property type="term" value="P:protein transport by the Sec complex"/>
    <property type="evidence" value="ECO:0007669"/>
    <property type="project" value="UniProtKB-UniRule"/>
</dbReference>
<dbReference type="FunFam" id="1.10.3370.10:FF:000001">
    <property type="entry name" value="Preprotein translocase subunit SecY"/>
    <property type="match status" value="1"/>
</dbReference>
<dbReference type="Gene3D" id="1.10.3370.10">
    <property type="entry name" value="SecY subunit domain"/>
    <property type="match status" value="1"/>
</dbReference>
<dbReference type="HAMAP" id="MF_01465">
    <property type="entry name" value="SecY"/>
    <property type="match status" value="1"/>
</dbReference>
<dbReference type="InterPro" id="IPR026593">
    <property type="entry name" value="SecY"/>
</dbReference>
<dbReference type="InterPro" id="IPR002208">
    <property type="entry name" value="SecY/SEC61-alpha"/>
</dbReference>
<dbReference type="InterPro" id="IPR030659">
    <property type="entry name" value="SecY_CS"/>
</dbReference>
<dbReference type="InterPro" id="IPR023201">
    <property type="entry name" value="SecY_dom_sf"/>
</dbReference>
<dbReference type="NCBIfam" id="TIGR00967">
    <property type="entry name" value="3a0501s007"/>
    <property type="match status" value="1"/>
</dbReference>
<dbReference type="PANTHER" id="PTHR10906">
    <property type="entry name" value="SECY/SEC61-ALPHA FAMILY MEMBER"/>
    <property type="match status" value="1"/>
</dbReference>
<dbReference type="Pfam" id="PF00344">
    <property type="entry name" value="SecY"/>
    <property type="match status" value="1"/>
</dbReference>
<dbReference type="PIRSF" id="PIRSF004557">
    <property type="entry name" value="SecY"/>
    <property type="match status" value="1"/>
</dbReference>
<dbReference type="PRINTS" id="PR00303">
    <property type="entry name" value="SECYTRNLCASE"/>
</dbReference>
<dbReference type="SUPFAM" id="SSF103491">
    <property type="entry name" value="Preprotein translocase SecY subunit"/>
    <property type="match status" value="1"/>
</dbReference>
<dbReference type="PROSITE" id="PS00755">
    <property type="entry name" value="SECY_1"/>
    <property type="match status" value="1"/>
</dbReference>
<dbReference type="PROSITE" id="PS00756">
    <property type="entry name" value="SECY_2"/>
    <property type="match status" value="1"/>
</dbReference>
<name>SECY_SYNE7</name>
<organism>
    <name type="scientific">Synechococcus elongatus (strain ATCC 33912 / PCC 7942 / FACHB-805)</name>
    <name type="common">Anacystis nidulans R2</name>
    <dbReference type="NCBI Taxonomy" id="1140"/>
    <lineage>
        <taxon>Bacteria</taxon>
        <taxon>Bacillati</taxon>
        <taxon>Cyanobacteriota</taxon>
        <taxon>Cyanophyceae</taxon>
        <taxon>Synechococcales</taxon>
        <taxon>Synechococcaceae</taxon>
        <taxon>Synechococcus</taxon>
    </lineage>
</organism>
<feature type="chain" id="PRO_0000131756" description="Protein translocase subunit SecY">
    <location>
        <begin position="1"/>
        <end position="439"/>
    </location>
</feature>
<feature type="transmembrane region" description="Helical" evidence="1">
    <location>
        <begin position="28"/>
        <end position="48"/>
    </location>
</feature>
<feature type="transmembrane region" description="Helical" evidence="1">
    <location>
        <begin position="73"/>
        <end position="93"/>
    </location>
</feature>
<feature type="transmembrane region" description="Helical" evidence="1">
    <location>
        <begin position="127"/>
        <end position="147"/>
    </location>
</feature>
<feature type="transmembrane region" description="Helical" evidence="1">
    <location>
        <begin position="156"/>
        <end position="176"/>
    </location>
</feature>
<feature type="transmembrane region" description="Helical" evidence="1">
    <location>
        <begin position="179"/>
        <end position="199"/>
    </location>
</feature>
<feature type="transmembrane region" description="Helical" evidence="1">
    <location>
        <begin position="220"/>
        <end position="240"/>
    </location>
</feature>
<feature type="transmembrane region" description="Helical" evidence="1">
    <location>
        <begin position="276"/>
        <end position="296"/>
    </location>
</feature>
<feature type="transmembrane region" description="Helical" evidence="1">
    <location>
        <begin position="318"/>
        <end position="338"/>
    </location>
</feature>
<feature type="transmembrane region" description="Helical" evidence="1">
    <location>
        <begin position="375"/>
        <end position="395"/>
    </location>
</feature>
<feature type="transmembrane region" description="Helical" evidence="1">
    <location>
        <begin position="401"/>
        <end position="421"/>
    </location>
</feature>
<protein>
    <recommendedName>
        <fullName evidence="1">Protein translocase subunit SecY</fullName>
    </recommendedName>
</protein>
<reference key="1">
    <citation type="journal article" date="1992" name="Biochim. Biophys. Acta">
        <title>Cloning and characterization of the secY gene from the cyanobacterium Synechococcus PCC7942.</title>
        <authorList>
            <person name="Nakai M."/>
            <person name="Tanaka A."/>
            <person name="Omata T."/>
            <person name="Endo T."/>
        </authorList>
    </citation>
    <scope>NUCLEOTIDE SEQUENCE [GENOMIC DNA]</scope>
</reference>
<reference key="2">
    <citation type="submission" date="2005-08" db="EMBL/GenBank/DDBJ databases">
        <title>Complete sequence of chromosome 1 of Synechococcus elongatus PCC 7942.</title>
        <authorList>
            <consortium name="US DOE Joint Genome Institute"/>
            <person name="Copeland A."/>
            <person name="Lucas S."/>
            <person name="Lapidus A."/>
            <person name="Barry K."/>
            <person name="Detter J.C."/>
            <person name="Glavina T."/>
            <person name="Hammon N."/>
            <person name="Israni S."/>
            <person name="Pitluck S."/>
            <person name="Schmutz J."/>
            <person name="Larimer F."/>
            <person name="Land M."/>
            <person name="Kyrpides N."/>
            <person name="Lykidis A."/>
            <person name="Golden S."/>
            <person name="Richardson P."/>
        </authorList>
    </citation>
    <scope>NUCLEOTIDE SEQUENCE [LARGE SCALE GENOMIC DNA]</scope>
    <source>
        <strain>ATCC 33912 / PCC 7942 / FACHB-805</strain>
    </source>
</reference>
<evidence type="ECO:0000255" key="1">
    <source>
        <dbReference type="HAMAP-Rule" id="MF_01465"/>
    </source>
</evidence>